<sequence length="429" mass="45939">MSAIVDIIGREVLDSRGNPTVECDVLLESGVMGRAAVPSGASTGSREAIELRDGDKSRYLGKGVLKAVEHINTEISEAIMGLDASEQAFLDRTLIDLDGTENKSRLGANAMLAVSMAVAKAAAEEAGLPLYRYFGGSGAMQMPVPMMNIVNGGAHANNSLDIQEFMVMPVSATSFREALRCGAEVFHALKKILADKGMSTAVGDEGGFAPNFSSNEECLNTIVQAVEKAGYRMGEDVLLALDCAASEFYHEAEDVYVLEGEGLKLSSTQFADYLANLCDKFPIVSIEDGMAEGDWDGWKTLTDKLGKRVQLVGDDLFVTNTKILKEGIDKGIGNSILIKINQIGTLTETFAAIEMAKRAGYTAVISHRSGETEDSTIADIAVGTNAGQIKTGSLSRSDRISKYNQLLRIEEDLGDIASYPGKSAFYNLR</sequence>
<name>ENO_CUPPJ</name>
<comment type="function">
    <text evidence="1">Catalyzes the reversible conversion of 2-phosphoglycerate (2-PG) into phosphoenolpyruvate (PEP). It is essential for the degradation of carbohydrates via glycolysis.</text>
</comment>
<comment type="catalytic activity">
    <reaction evidence="1">
        <text>(2R)-2-phosphoglycerate = phosphoenolpyruvate + H2O</text>
        <dbReference type="Rhea" id="RHEA:10164"/>
        <dbReference type="ChEBI" id="CHEBI:15377"/>
        <dbReference type="ChEBI" id="CHEBI:58289"/>
        <dbReference type="ChEBI" id="CHEBI:58702"/>
        <dbReference type="EC" id="4.2.1.11"/>
    </reaction>
</comment>
<comment type="cofactor">
    <cofactor evidence="1">
        <name>Mg(2+)</name>
        <dbReference type="ChEBI" id="CHEBI:18420"/>
    </cofactor>
    <text evidence="1">Binds a second Mg(2+) ion via substrate during catalysis.</text>
</comment>
<comment type="pathway">
    <text evidence="1">Carbohydrate degradation; glycolysis; pyruvate from D-glyceraldehyde 3-phosphate: step 4/5.</text>
</comment>
<comment type="subcellular location">
    <subcellularLocation>
        <location evidence="1">Cytoplasm</location>
    </subcellularLocation>
    <subcellularLocation>
        <location evidence="1">Secreted</location>
    </subcellularLocation>
    <subcellularLocation>
        <location evidence="1">Cell surface</location>
    </subcellularLocation>
    <text evidence="1">Fractions of enolase are present in both the cytoplasm and on the cell surface.</text>
</comment>
<comment type="similarity">
    <text evidence="1">Belongs to the enolase family.</text>
</comment>
<accession>Q473G4</accession>
<gene>
    <name evidence="1" type="primary">eno</name>
    <name type="ordered locus">Reut_A1091</name>
</gene>
<organism>
    <name type="scientific">Cupriavidus pinatubonensis (strain JMP 134 / LMG 1197)</name>
    <name type="common">Cupriavidus necator (strain JMP 134)</name>
    <dbReference type="NCBI Taxonomy" id="264198"/>
    <lineage>
        <taxon>Bacteria</taxon>
        <taxon>Pseudomonadati</taxon>
        <taxon>Pseudomonadota</taxon>
        <taxon>Betaproteobacteria</taxon>
        <taxon>Burkholderiales</taxon>
        <taxon>Burkholderiaceae</taxon>
        <taxon>Cupriavidus</taxon>
    </lineage>
</organism>
<reference key="1">
    <citation type="journal article" date="2010" name="PLoS ONE">
        <title>The complete multipartite genome sequence of Cupriavidus necator JMP134, a versatile pollutant degrader.</title>
        <authorList>
            <person name="Lykidis A."/>
            <person name="Perez-Pantoja D."/>
            <person name="Ledger T."/>
            <person name="Mavromatis K."/>
            <person name="Anderson I.J."/>
            <person name="Ivanova N.N."/>
            <person name="Hooper S.D."/>
            <person name="Lapidus A."/>
            <person name="Lucas S."/>
            <person name="Gonzalez B."/>
            <person name="Kyrpides N.C."/>
        </authorList>
    </citation>
    <scope>NUCLEOTIDE SEQUENCE [LARGE SCALE GENOMIC DNA]</scope>
    <source>
        <strain>JMP134 / LMG 1197</strain>
    </source>
</reference>
<feature type="chain" id="PRO_0000267083" description="Enolase">
    <location>
        <begin position="1"/>
        <end position="429"/>
    </location>
</feature>
<feature type="active site" description="Proton donor" evidence="1">
    <location>
        <position position="205"/>
    </location>
</feature>
<feature type="active site" description="Proton acceptor" evidence="1">
    <location>
        <position position="339"/>
    </location>
</feature>
<feature type="binding site" evidence="1">
    <location>
        <position position="163"/>
    </location>
    <ligand>
        <name>(2R)-2-phosphoglycerate</name>
        <dbReference type="ChEBI" id="CHEBI:58289"/>
    </ligand>
</feature>
<feature type="binding site" evidence="1">
    <location>
        <position position="242"/>
    </location>
    <ligand>
        <name>Mg(2+)</name>
        <dbReference type="ChEBI" id="CHEBI:18420"/>
    </ligand>
</feature>
<feature type="binding site" evidence="1">
    <location>
        <position position="287"/>
    </location>
    <ligand>
        <name>Mg(2+)</name>
        <dbReference type="ChEBI" id="CHEBI:18420"/>
    </ligand>
</feature>
<feature type="binding site" evidence="1">
    <location>
        <position position="314"/>
    </location>
    <ligand>
        <name>Mg(2+)</name>
        <dbReference type="ChEBI" id="CHEBI:18420"/>
    </ligand>
</feature>
<feature type="binding site" evidence="1">
    <location>
        <position position="339"/>
    </location>
    <ligand>
        <name>(2R)-2-phosphoglycerate</name>
        <dbReference type="ChEBI" id="CHEBI:58289"/>
    </ligand>
</feature>
<feature type="binding site" evidence="1">
    <location>
        <position position="368"/>
    </location>
    <ligand>
        <name>(2R)-2-phosphoglycerate</name>
        <dbReference type="ChEBI" id="CHEBI:58289"/>
    </ligand>
</feature>
<feature type="binding site" evidence="1">
    <location>
        <position position="369"/>
    </location>
    <ligand>
        <name>(2R)-2-phosphoglycerate</name>
        <dbReference type="ChEBI" id="CHEBI:58289"/>
    </ligand>
</feature>
<feature type="binding site" evidence="1">
    <location>
        <position position="390"/>
    </location>
    <ligand>
        <name>(2R)-2-phosphoglycerate</name>
        <dbReference type="ChEBI" id="CHEBI:58289"/>
    </ligand>
</feature>
<keyword id="KW-0963">Cytoplasm</keyword>
<keyword id="KW-0324">Glycolysis</keyword>
<keyword id="KW-0456">Lyase</keyword>
<keyword id="KW-0460">Magnesium</keyword>
<keyword id="KW-0479">Metal-binding</keyword>
<keyword id="KW-0964">Secreted</keyword>
<protein>
    <recommendedName>
        <fullName evidence="1">Enolase</fullName>
        <ecNumber evidence="1">4.2.1.11</ecNumber>
    </recommendedName>
    <alternativeName>
        <fullName evidence="1">2-phospho-D-glycerate hydro-lyase</fullName>
    </alternativeName>
    <alternativeName>
        <fullName evidence="1">2-phosphoglycerate dehydratase</fullName>
    </alternativeName>
</protein>
<dbReference type="EC" id="4.2.1.11" evidence="1"/>
<dbReference type="EMBL" id="CP000090">
    <property type="protein sequence ID" value="AAZ60469.1"/>
    <property type="molecule type" value="Genomic_DNA"/>
</dbReference>
<dbReference type="SMR" id="Q473G4"/>
<dbReference type="STRING" id="264198.Reut_A1091"/>
<dbReference type="KEGG" id="reu:Reut_A1091"/>
<dbReference type="eggNOG" id="COG0148">
    <property type="taxonomic scope" value="Bacteria"/>
</dbReference>
<dbReference type="HOGENOM" id="CLU_031223_2_1_4"/>
<dbReference type="OrthoDB" id="9804716at2"/>
<dbReference type="UniPathway" id="UPA00109">
    <property type="reaction ID" value="UER00187"/>
</dbReference>
<dbReference type="GO" id="GO:0009986">
    <property type="term" value="C:cell surface"/>
    <property type="evidence" value="ECO:0007669"/>
    <property type="project" value="UniProtKB-SubCell"/>
</dbReference>
<dbReference type="GO" id="GO:0005576">
    <property type="term" value="C:extracellular region"/>
    <property type="evidence" value="ECO:0007669"/>
    <property type="project" value="UniProtKB-SubCell"/>
</dbReference>
<dbReference type="GO" id="GO:0000015">
    <property type="term" value="C:phosphopyruvate hydratase complex"/>
    <property type="evidence" value="ECO:0007669"/>
    <property type="project" value="InterPro"/>
</dbReference>
<dbReference type="GO" id="GO:0000287">
    <property type="term" value="F:magnesium ion binding"/>
    <property type="evidence" value="ECO:0007669"/>
    <property type="project" value="UniProtKB-UniRule"/>
</dbReference>
<dbReference type="GO" id="GO:0004634">
    <property type="term" value="F:phosphopyruvate hydratase activity"/>
    <property type="evidence" value="ECO:0007669"/>
    <property type="project" value="UniProtKB-UniRule"/>
</dbReference>
<dbReference type="GO" id="GO:0006096">
    <property type="term" value="P:glycolytic process"/>
    <property type="evidence" value="ECO:0007669"/>
    <property type="project" value="UniProtKB-UniRule"/>
</dbReference>
<dbReference type="CDD" id="cd03313">
    <property type="entry name" value="enolase"/>
    <property type="match status" value="1"/>
</dbReference>
<dbReference type="FunFam" id="3.20.20.120:FF:000001">
    <property type="entry name" value="Enolase"/>
    <property type="match status" value="1"/>
</dbReference>
<dbReference type="FunFam" id="3.30.390.10:FF:000001">
    <property type="entry name" value="Enolase"/>
    <property type="match status" value="1"/>
</dbReference>
<dbReference type="Gene3D" id="3.20.20.120">
    <property type="entry name" value="Enolase-like C-terminal domain"/>
    <property type="match status" value="1"/>
</dbReference>
<dbReference type="Gene3D" id="3.30.390.10">
    <property type="entry name" value="Enolase-like, N-terminal domain"/>
    <property type="match status" value="1"/>
</dbReference>
<dbReference type="HAMAP" id="MF_00318">
    <property type="entry name" value="Enolase"/>
    <property type="match status" value="1"/>
</dbReference>
<dbReference type="InterPro" id="IPR000941">
    <property type="entry name" value="Enolase"/>
</dbReference>
<dbReference type="InterPro" id="IPR036849">
    <property type="entry name" value="Enolase-like_C_sf"/>
</dbReference>
<dbReference type="InterPro" id="IPR029017">
    <property type="entry name" value="Enolase-like_N"/>
</dbReference>
<dbReference type="InterPro" id="IPR020810">
    <property type="entry name" value="Enolase_C"/>
</dbReference>
<dbReference type="InterPro" id="IPR020809">
    <property type="entry name" value="Enolase_CS"/>
</dbReference>
<dbReference type="InterPro" id="IPR020811">
    <property type="entry name" value="Enolase_N"/>
</dbReference>
<dbReference type="NCBIfam" id="TIGR01060">
    <property type="entry name" value="eno"/>
    <property type="match status" value="1"/>
</dbReference>
<dbReference type="PANTHER" id="PTHR11902">
    <property type="entry name" value="ENOLASE"/>
    <property type="match status" value="1"/>
</dbReference>
<dbReference type="PANTHER" id="PTHR11902:SF1">
    <property type="entry name" value="ENOLASE"/>
    <property type="match status" value="1"/>
</dbReference>
<dbReference type="Pfam" id="PF00113">
    <property type="entry name" value="Enolase_C"/>
    <property type="match status" value="1"/>
</dbReference>
<dbReference type="Pfam" id="PF03952">
    <property type="entry name" value="Enolase_N"/>
    <property type="match status" value="1"/>
</dbReference>
<dbReference type="PIRSF" id="PIRSF001400">
    <property type="entry name" value="Enolase"/>
    <property type="match status" value="1"/>
</dbReference>
<dbReference type="PRINTS" id="PR00148">
    <property type="entry name" value="ENOLASE"/>
</dbReference>
<dbReference type="SFLD" id="SFLDS00001">
    <property type="entry name" value="Enolase"/>
    <property type="match status" value="1"/>
</dbReference>
<dbReference type="SFLD" id="SFLDF00002">
    <property type="entry name" value="enolase"/>
    <property type="match status" value="1"/>
</dbReference>
<dbReference type="SMART" id="SM01192">
    <property type="entry name" value="Enolase_C"/>
    <property type="match status" value="1"/>
</dbReference>
<dbReference type="SMART" id="SM01193">
    <property type="entry name" value="Enolase_N"/>
    <property type="match status" value="1"/>
</dbReference>
<dbReference type="SUPFAM" id="SSF51604">
    <property type="entry name" value="Enolase C-terminal domain-like"/>
    <property type="match status" value="1"/>
</dbReference>
<dbReference type="SUPFAM" id="SSF54826">
    <property type="entry name" value="Enolase N-terminal domain-like"/>
    <property type="match status" value="1"/>
</dbReference>
<dbReference type="PROSITE" id="PS00164">
    <property type="entry name" value="ENOLASE"/>
    <property type="match status" value="1"/>
</dbReference>
<proteinExistence type="inferred from homology"/>
<evidence type="ECO:0000255" key="1">
    <source>
        <dbReference type="HAMAP-Rule" id="MF_00318"/>
    </source>
</evidence>